<comment type="function">
    <text evidence="1">Endonuclease that specifically degrades the RNA of RNA-DNA hybrids.</text>
</comment>
<comment type="catalytic activity">
    <reaction evidence="1">
        <text>Endonucleolytic cleavage to 5'-phosphomonoester.</text>
        <dbReference type="EC" id="3.1.26.4"/>
    </reaction>
</comment>
<comment type="cofactor">
    <cofactor evidence="1">
        <name>Mg(2+)</name>
        <dbReference type="ChEBI" id="CHEBI:18420"/>
    </cofactor>
    <text evidence="1">Binds 1 Mg(2+) ion per subunit. May bind a second metal ion at a regulatory site, or after substrate binding.</text>
</comment>
<comment type="subunit">
    <text evidence="1">Monomer.</text>
</comment>
<comment type="subcellular location">
    <subcellularLocation>
        <location evidence="1">Cytoplasm</location>
    </subcellularLocation>
</comment>
<comment type="similarity">
    <text evidence="1">Belongs to the RNase H family.</text>
</comment>
<name>RNH_BRUSU</name>
<accession>P66674</accession>
<accession>G0K726</accession>
<accession>Q8YFR3</accession>
<evidence type="ECO:0000255" key="1">
    <source>
        <dbReference type="HAMAP-Rule" id="MF_00042"/>
    </source>
</evidence>
<evidence type="ECO:0000255" key="2">
    <source>
        <dbReference type="PROSITE-ProRule" id="PRU00408"/>
    </source>
</evidence>
<protein>
    <recommendedName>
        <fullName evidence="1">Ribonuclease HI</fullName>
        <shortName evidence="1">RNase HI</shortName>
        <ecNumber evidence="1">3.1.26.4</ecNumber>
    </recommendedName>
</protein>
<proteinExistence type="inferred from homology"/>
<keyword id="KW-0963">Cytoplasm</keyword>
<keyword id="KW-0255">Endonuclease</keyword>
<keyword id="KW-0378">Hydrolase</keyword>
<keyword id="KW-0460">Magnesium</keyword>
<keyword id="KW-0479">Metal-binding</keyword>
<keyword id="KW-0540">Nuclease</keyword>
<sequence>MKRIEAYTDGACSGNPGPGGWGALLRWNGNEKELKGGEAETTNNRMELMAAISALSALKEPCEVDLYTDSVYVRDGISGWIEGWKRNGWKTAAKKPVKNAELWQALDEARKAHKVTWHWIKGHAGHPENERADELARAGMEPFKYAGHRTLKVK</sequence>
<gene>
    <name evidence="1" type="primary">rnhA</name>
    <name type="ordered locus">BR0477</name>
    <name type="ordered locus">BS1330_I0478</name>
</gene>
<feature type="chain" id="PRO_0000195366" description="Ribonuclease HI">
    <location>
        <begin position="1"/>
        <end position="154"/>
    </location>
</feature>
<feature type="domain" description="RNase H type-1" evidence="2">
    <location>
        <begin position="1"/>
        <end position="141"/>
    </location>
</feature>
<feature type="binding site" evidence="1">
    <location>
        <position position="9"/>
    </location>
    <ligand>
        <name>Mg(2+)</name>
        <dbReference type="ChEBI" id="CHEBI:18420"/>
        <label>1</label>
    </ligand>
</feature>
<feature type="binding site" evidence="1">
    <location>
        <position position="9"/>
    </location>
    <ligand>
        <name>Mg(2+)</name>
        <dbReference type="ChEBI" id="CHEBI:18420"/>
        <label>2</label>
    </ligand>
</feature>
<feature type="binding site" evidence="1">
    <location>
        <position position="47"/>
    </location>
    <ligand>
        <name>Mg(2+)</name>
        <dbReference type="ChEBI" id="CHEBI:18420"/>
        <label>1</label>
    </ligand>
</feature>
<feature type="binding site" evidence="1">
    <location>
        <position position="69"/>
    </location>
    <ligand>
        <name>Mg(2+)</name>
        <dbReference type="ChEBI" id="CHEBI:18420"/>
        <label>1</label>
    </ligand>
</feature>
<feature type="binding site" evidence="1">
    <location>
        <position position="133"/>
    </location>
    <ligand>
        <name>Mg(2+)</name>
        <dbReference type="ChEBI" id="CHEBI:18420"/>
        <label>2</label>
    </ligand>
</feature>
<organism>
    <name type="scientific">Brucella suis biovar 1 (strain 1330)</name>
    <dbReference type="NCBI Taxonomy" id="204722"/>
    <lineage>
        <taxon>Bacteria</taxon>
        <taxon>Pseudomonadati</taxon>
        <taxon>Pseudomonadota</taxon>
        <taxon>Alphaproteobacteria</taxon>
        <taxon>Hyphomicrobiales</taxon>
        <taxon>Brucellaceae</taxon>
        <taxon>Brucella/Ochrobactrum group</taxon>
        <taxon>Brucella</taxon>
    </lineage>
</organism>
<dbReference type="EC" id="3.1.26.4" evidence="1"/>
<dbReference type="EMBL" id="AE014291">
    <property type="protein sequence ID" value="AAN29420.1"/>
    <property type="molecule type" value="Genomic_DNA"/>
</dbReference>
<dbReference type="EMBL" id="CP002997">
    <property type="protein sequence ID" value="AEM17833.1"/>
    <property type="molecule type" value="Genomic_DNA"/>
</dbReference>
<dbReference type="RefSeq" id="WP_002963635.1">
    <property type="nucleotide sequence ID" value="NZ_KN046804.1"/>
</dbReference>
<dbReference type="SMR" id="P66674"/>
<dbReference type="GeneID" id="97534154"/>
<dbReference type="KEGG" id="bms:BR0477"/>
<dbReference type="KEGG" id="bsi:BS1330_I0478"/>
<dbReference type="PATRIC" id="fig|204722.21.peg.1437"/>
<dbReference type="HOGENOM" id="CLU_030894_6_0_5"/>
<dbReference type="PhylomeDB" id="P66674"/>
<dbReference type="Proteomes" id="UP000007104">
    <property type="component" value="Chromosome I"/>
</dbReference>
<dbReference type="GO" id="GO:0005737">
    <property type="term" value="C:cytoplasm"/>
    <property type="evidence" value="ECO:0007669"/>
    <property type="project" value="UniProtKB-SubCell"/>
</dbReference>
<dbReference type="GO" id="GO:0000287">
    <property type="term" value="F:magnesium ion binding"/>
    <property type="evidence" value="ECO:0007669"/>
    <property type="project" value="UniProtKB-UniRule"/>
</dbReference>
<dbReference type="GO" id="GO:0003676">
    <property type="term" value="F:nucleic acid binding"/>
    <property type="evidence" value="ECO:0007669"/>
    <property type="project" value="InterPro"/>
</dbReference>
<dbReference type="GO" id="GO:0004523">
    <property type="term" value="F:RNA-DNA hybrid ribonuclease activity"/>
    <property type="evidence" value="ECO:0007669"/>
    <property type="project" value="UniProtKB-UniRule"/>
</dbReference>
<dbReference type="GO" id="GO:0043137">
    <property type="term" value="P:DNA replication, removal of RNA primer"/>
    <property type="evidence" value="ECO:0007669"/>
    <property type="project" value="TreeGrafter"/>
</dbReference>
<dbReference type="CDD" id="cd09278">
    <property type="entry name" value="RNase_HI_prokaryote_like"/>
    <property type="match status" value="1"/>
</dbReference>
<dbReference type="FunFam" id="3.30.420.10:FF:000089">
    <property type="entry name" value="Ribonuclease H"/>
    <property type="match status" value="1"/>
</dbReference>
<dbReference type="Gene3D" id="3.30.420.10">
    <property type="entry name" value="Ribonuclease H-like superfamily/Ribonuclease H"/>
    <property type="match status" value="1"/>
</dbReference>
<dbReference type="HAMAP" id="MF_00042">
    <property type="entry name" value="RNase_H"/>
    <property type="match status" value="1"/>
</dbReference>
<dbReference type="InterPro" id="IPR050092">
    <property type="entry name" value="RNase_H"/>
</dbReference>
<dbReference type="InterPro" id="IPR012337">
    <property type="entry name" value="RNaseH-like_sf"/>
</dbReference>
<dbReference type="InterPro" id="IPR002156">
    <property type="entry name" value="RNaseH_domain"/>
</dbReference>
<dbReference type="InterPro" id="IPR036397">
    <property type="entry name" value="RNaseH_sf"/>
</dbReference>
<dbReference type="InterPro" id="IPR022892">
    <property type="entry name" value="RNaseHI"/>
</dbReference>
<dbReference type="NCBIfam" id="NF001236">
    <property type="entry name" value="PRK00203.1"/>
    <property type="match status" value="1"/>
</dbReference>
<dbReference type="PANTHER" id="PTHR10642">
    <property type="entry name" value="RIBONUCLEASE H1"/>
    <property type="match status" value="1"/>
</dbReference>
<dbReference type="PANTHER" id="PTHR10642:SF26">
    <property type="entry name" value="RIBONUCLEASE H1"/>
    <property type="match status" value="1"/>
</dbReference>
<dbReference type="Pfam" id="PF00075">
    <property type="entry name" value="RNase_H"/>
    <property type="match status" value="1"/>
</dbReference>
<dbReference type="SUPFAM" id="SSF53098">
    <property type="entry name" value="Ribonuclease H-like"/>
    <property type="match status" value="1"/>
</dbReference>
<dbReference type="PROSITE" id="PS50879">
    <property type="entry name" value="RNASE_H_1"/>
    <property type="match status" value="1"/>
</dbReference>
<reference key="1">
    <citation type="journal article" date="2002" name="Proc. Natl. Acad. Sci. U.S.A.">
        <title>The Brucella suis genome reveals fundamental similarities between animal and plant pathogens and symbionts.</title>
        <authorList>
            <person name="Paulsen I.T."/>
            <person name="Seshadri R."/>
            <person name="Nelson K.E."/>
            <person name="Eisen J.A."/>
            <person name="Heidelberg J.F."/>
            <person name="Read T.D."/>
            <person name="Dodson R.J."/>
            <person name="Umayam L.A."/>
            <person name="Brinkac L.M."/>
            <person name="Beanan M.J."/>
            <person name="Daugherty S.C."/>
            <person name="DeBoy R.T."/>
            <person name="Durkin A.S."/>
            <person name="Kolonay J.F."/>
            <person name="Madupu R."/>
            <person name="Nelson W.C."/>
            <person name="Ayodeji B."/>
            <person name="Kraul M."/>
            <person name="Shetty J."/>
            <person name="Malek J.A."/>
            <person name="Van Aken S.E."/>
            <person name="Riedmuller S."/>
            <person name="Tettelin H."/>
            <person name="Gill S.R."/>
            <person name="White O."/>
            <person name="Salzberg S.L."/>
            <person name="Hoover D.L."/>
            <person name="Lindler L.E."/>
            <person name="Halling S.M."/>
            <person name="Boyle S.M."/>
            <person name="Fraser C.M."/>
        </authorList>
    </citation>
    <scope>NUCLEOTIDE SEQUENCE [LARGE SCALE GENOMIC DNA]</scope>
    <source>
        <strain>1330</strain>
    </source>
</reference>
<reference key="2">
    <citation type="journal article" date="2011" name="J. Bacteriol.">
        <title>Revised genome sequence of Brucella suis 1330.</title>
        <authorList>
            <person name="Tae H."/>
            <person name="Shallom S."/>
            <person name="Settlage R."/>
            <person name="Preston D."/>
            <person name="Adams L.G."/>
            <person name="Garner H.R."/>
        </authorList>
    </citation>
    <scope>NUCLEOTIDE SEQUENCE [LARGE SCALE GENOMIC DNA]</scope>
    <source>
        <strain>1330</strain>
    </source>
</reference>